<protein>
    <recommendedName>
        <fullName>Non-toxic nonhemagglutinin type A</fullName>
        <shortName>NTNHA</shortName>
    </recommendedName>
    <alternativeName>
        <fullName>Botulinum neurotoxin type A non-toxic component</fullName>
    </alternativeName>
</protein>
<proteinExistence type="evidence at protein level"/>
<evidence type="ECO:0000269" key="1">
    <source>
    </source>
</evidence>
<evidence type="ECO:0000303" key="2">
    <source>
    </source>
</evidence>
<evidence type="ECO:0000305" key="3"/>
<evidence type="ECO:0007744" key="4">
    <source>
        <dbReference type="PDB" id="3V0A"/>
    </source>
</evidence>
<evidence type="ECO:0007744" key="5">
    <source>
        <dbReference type="PDB" id="3V0B"/>
    </source>
</evidence>
<evidence type="ECO:0007829" key="6">
    <source>
        <dbReference type="PDB" id="3V0A"/>
    </source>
</evidence>
<accession>Q45914</accession>
<reference key="1">
    <citation type="journal article" date="1995" name="FEBS Lett.">
        <title>Molecular characterization of two forms of nontoxic-nonhemagglutinin components of Clostridium botulinum type A progenitor toxins.</title>
        <authorList>
            <person name="Fujita R."/>
            <person name="Fujinaga Y."/>
            <person name="Inoue K."/>
            <person name="Nakajima H."/>
            <person name="Kumon H."/>
            <person name="Oguma K."/>
        </authorList>
    </citation>
    <scope>NUCLEOTIDE SEQUENCE [GENOMIC DNA]</scope>
    <source>
        <strain>NIH / Type A</strain>
    </source>
</reference>
<reference key="2">
    <citation type="submission" date="2015-06" db="EMBL/GenBank/DDBJ databases">
        <title>Draft genome sequence of Clostridium botulinum strain ATCC 17862.</title>
        <authorList>
            <consortium name="Consortium for Microbial Forensics and Genomics (microFORGE)"/>
            <person name="Knight B.M."/>
            <person name="O'Shea R.M."/>
            <person name="Jones B.A."/>
            <person name="Roberts D.P."/>
            <person name="Lin D."/>
            <person name="Hari K."/>
            <person name="Winegar R.A."/>
        </authorList>
    </citation>
    <scope>NUCLEOTIDE SEQUENCE [LARGE SCALE GENOMIC DNA]</scope>
    <source>
        <strain>ATCC 17862 / Type A</strain>
    </source>
</reference>
<reference evidence="4 5" key="3">
    <citation type="journal article" date="2012" name="Science">
        <title>Botulinum neurotoxin is shielded by NTNHA in an interlocked complex.</title>
        <authorList>
            <person name="Gu S."/>
            <person name="Rumpel S."/>
            <person name="Zhou J."/>
            <person name="Strotmeier J."/>
            <person name="Bigalke H."/>
            <person name="Perry K."/>
            <person name="Shoemaker C.B."/>
            <person name="Rummel A."/>
            <person name="Jin R."/>
        </authorList>
    </citation>
    <scope>X-RAY CRYSTALLOGRAPHY (2.70 ANGSTROMS) IN COMPLEX WITH BONT/A</scope>
    <scope>FUNCTION</scope>
    <scope>SUBUNIT</scope>
    <scope>DOMAIN</scope>
    <scope>PROTEOLYTIC CLEAVAGE</scope>
    <scope>DISULFIDE BONDS</scope>
    <source>
        <strain>Type A</strain>
    </source>
</reference>
<sequence>MNINDNLSINSPVDNKNVVVVRARKTDTVFKAFKVAPNIWVAPERYYGESLSIDEEYKVDGGIYDSNFLSQDSEKDKFLQAIITLLKRINSTNAGEKLLSLISTAIPFPYGYIGGGYYAPNMITFGSAPKSNKKLNSLISSTIPFPYAGYRETNYLSSEDNKSFYASNIVIFGPGANIVENNTVFYKKEDAENGMGTMTEIWFQPFLTYKYDEFYIDPAIELIKCLIKSLYFLYGIKPSDDLVIPYRLRSELENIEYSQLNIVDLLVSGGIDPKFINTDPYWFTDNYFSNAKKVFEDHRNIYETEIEGNNAIGNDIKLRLKQKFRININDIWELNLNYFSKEFSIMMPDRFNNALKHFYRKQYYKIDYPENYSINGFVNGQINAQLSLSDRNQDIINKPEEIINLLNGNNVSLMRSNIYGDGLKSTVDDFYSNYKIPYNRAYEYHFNNSNDSSLDNVNIGVIDNIPEIIDVNPYKENCDKFSPVQKITSTREINTNIPWPINYLQAQNTNNEKFSLSSDFVEVVSSKDKSLVYSFLSNVMFYLDSIKDNSPIDTDKKYYLWLREIFRNYSFDITATQEINTNCGINKVVTWFGKALNILNTSDSFVEEFQNLGAISLINKKENLSMPIIESYEIPNDMLGLPLNDLNEKLFNIYSKNTAYFKKIYYNFLDQWWTQYYSQYFDLICMAKRSVLAQETLIKRIIQKKLSYLIGNSNISSDNLALMNLTTTNTLRDISNESQIAMNNVDSFLNNAAICVFESNIYPKFISFMEQCINNINIKTKEFIQKCTNINEDEKLQLINQNVFNSLDFEFLNIQNMKSLFSSETALLIKEETWPYELVLYAFKEPGNNVIGDASGKNTSIEYSKDIGLVYGINSDALYLNGSNQSISFSNDFFENGLTNSFSIYFWLRNLGKDTIKSKLIGSKEDNCGWEIYFQDTGLVFNMIDSNGNEKNIYLSDVSNNSWHYITISVDRLKEQLLIFIDDNLVANESIKEILNIYSSNIISLLSENNPSYIEGLTILNKPTTSQEVLSNYFEVLNNSYIRDSNEERLEYNKTYQLYNYVFSDKPICEVKQNNNIYLTINNTNNLNLQASKFKLLSINPNKQYVQKLDEVIISVLDNMEKYIDISEDNRLQLIDNKNNAKKMIISNDIFISNCLTLSYNGKYICLSMKDENHNWMICNNDMSKYLYLWSFK</sequence>
<keyword id="KW-0002">3D-structure</keyword>
<keyword id="KW-1015">Disulfide bond</keyword>
<keyword id="KW-0843">Virulence</keyword>
<name>BXAN_CLOBO</name>
<gene>
    <name evidence="2" type="primary">ant</name>
    <name type="synonym">ntnh</name>
    <name type="ORF">ACP52_06665</name>
</gene>
<dbReference type="EMBL" id="D67030">
    <property type="protein sequence ID" value="BAA11050.1"/>
    <property type="molecule type" value="Genomic_DNA"/>
</dbReference>
<dbReference type="EMBL" id="LGIK01000019">
    <property type="protein sequence ID" value="KON10585.1"/>
    <property type="molecule type" value="Genomic_DNA"/>
</dbReference>
<dbReference type="PIR" id="S68218">
    <property type="entry name" value="S68218"/>
</dbReference>
<dbReference type="RefSeq" id="WP_011948510.1">
    <property type="nucleotide sequence ID" value="NZ_SWYN01000009.1"/>
</dbReference>
<dbReference type="PDB" id="3V0A">
    <property type="method" value="X-ray"/>
    <property type="resolution" value="2.70 A"/>
    <property type="chains" value="B=1-1193"/>
</dbReference>
<dbReference type="PDB" id="3V0B">
    <property type="method" value="X-ray"/>
    <property type="resolution" value="3.90 A"/>
    <property type="chains" value="B=1-1193"/>
</dbReference>
<dbReference type="PDBsum" id="3V0A"/>
<dbReference type="PDBsum" id="3V0B"/>
<dbReference type="SMR" id="Q45914"/>
<dbReference type="DIP" id="DIP-1006N"/>
<dbReference type="IntAct" id="Q45914">
    <property type="interactions" value="1"/>
</dbReference>
<dbReference type="GeneID" id="5185060"/>
<dbReference type="PATRIC" id="fig|1491.444.peg.1066"/>
<dbReference type="OMA" id="GWEIYFE"/>
<dbReference type="OrthoDB" id="1931427at2"/>
<dbReference type="EvolutionaryTrace" id="Q45914"/>
<dbReference type="GO" id="GO:0005576">
    <property type="term" value="C:extracellular region"/>
    <property type="evidence" value="ECO:0007669"/>
    <property type="project" value="InterPro"/>
</dbReference>
<dbReference type="GO" id="GO:0004222">
    <property type="term" value="F:metalloendopeptidase activity"/>
    <property type="evidence" value="ECO:0007669"/>
    <property type="project" value="InterPro"/>
</dbReference>
<dbReference type="GO" id="GO:0008270">
    <property type="term" value="F:zinc ion binding"/>
    <property type="evidence" value="ECO:0007669"/>
    <property type="project" value="InterPro"/>
</dbReference>
<dbReference type="GO" id="GO:0006508">
    <property type="term" value="P:proteolysis"/>
    <property type="evidence" value="ECO:0007669"/>
    <property type="project" value="InterPro"/>
</dbReference>
<dbReference type="Gene3D" id="2.60.120.200">
    <property type="match status" value="1"/>
</dbReference>
<dbReference type="Gene3D" id="2.80.10.50">
    <property type="match status" value="1"/>
</dbReference>
<dbReference type="Gene3D" id="1.20.1120.10">
    <property type="entry name" value="Clostridium botulinum neurotoxin b, 'coiled-coil' domain"/>
    <property type="match status" value="1"/>
</dbReference>
<dbReference type="Gene3D" id="3.90.1240.10">
    <property type="entry name" value="Metalloproteases ('zincins'), catalytic domain like"/>
    <property type="match status" value="2"/>
</dbReference>
<dbReference type="InterPro" id="IPR000395">
    <property type="entry name" value="Bot/tetX_LC"/>
</dbReference>
<dbReference type="InterPro" id="IPR036248">
    <property type="entry name" value="Clostridium_toxin_transloc"/>
</dbReference>
<dbReference type="InterPro" id="IPR013320">
    <property type="entry name" value="ConA-like_dom_sf"/>
</dbReference>
<dbReference type="InterPro" id="IPR013677">
    <property type="entry name" value="Nontoxic_nonhemagglutn_C"/>
</dbReference>
<dbReference type="InterPro" id="IPR012928">
    <property type="entry name" value="Toxin_rcpt-bd_N"/>
</dbReference>
<dbReference type="NCBIfam" id="NF033911">
    <property type="entry name" value="botu_NTNH"/>
    <property type="match status" value="1"/>
</dbReference>
<dbReference type="Pfam" id="PF08470">
    <property type="entry name" value="NTNH_C"/>
    <property type="match status" value="1"/>
</dbReference>
<dbReference type="Pfam" id="PF01742">
    <property type="entry name" value="Peptidase_M27"/>
    <property type="match status" value="1"/>
</dbReference>
<dbReference type="Pfam" id="PF22133">
    <property type="entry name" value="Toxin_BN_H"/>
    <property type="match status" value="1"/>
</dbReference>
<dbReference type="Pfam" id="PF07953">
    <property type="entry name" value="Toxin_R_bind_N"/>
    <property type="match status" value="1"/>
</dbReference>
<dbReference type="PRINTS" id="PR00760">
    <property type="entry name" value="BONTOXILYSIN"/>
</dbReference>
<dbReference type="SUPFAM" id="SSF58091">
    <property type="entry name" value="Clostridium neurotoxins, 'coiled-coil' domain"/>
    <property type="match status" value="1"/>
</dbReference>
<dbReference type="SUPFAM" id="SSF49899">
    <property type="entry name" value="Concanavalin A-like lectins/glucanases"/>
    <property type="match status" value="1"/>
</dbReference>
<dbReference type="SUPFAM" id="SSF55486">
    <property type="entry name" value="Metalloproteases ('zincins'), catalytic domain"/>
    <property type="match status" value="1"/>
</dbReference>
<comment type="function">
    <text evidence="1">Assembles with botulinum neurotoxin type A (BoNT/A) and protects it against pH-mediated inactivation or protease activity at pH 2.6 (the pH of the animal gastrointestinal tract) but not at pH 6.0 (PubMed:22363010). Necessary for neurotoxicity.</text>
</comment>
<comment type="subunit">
    <text>Forms a highly interlocked heterodimer with botulinum neurotoxin type A at pH 6.0 but not at pH 7.5, called the minimally functional progenitor toxin complex (M-PTC) (BoNT/A, botA) (PubMed:22363010).</text>
</comment>
<comment type="interaction">
    <interactant intactId="EBI-16109965">
        <id>Q45914</id>
    </interactant>
    <interactant intactId="EBI-16109901">
        <id>A5HZZ4</id>
        <label>ha70</label>
    </interactant>
    <organismsDiffer>true</organismsDiffer>
    <experiments>5</experiments>
</comment>
<comment type="domain">
    <text evidence="1">Has 3 domains that are structurally very similar to those in BoNT/A; light chain (nLC, equivalent to the light chain, residues 1-408), N-heavy chain (nHN, residues 409-829) and C-heavy chain (nHC, residues 830-1193) (PubMed:22363010).</text>
</comment>
<comment type="PTM">
    <text evidence="1">The 133-Lys-|-Lys-134 bond is cleaved during long-term storage; the cleavage site is masked in the M-PTC complex (PubMed:22363010).</text>
</comment>
<comment type="similarity">
    <text evidence="3">Belongs to the botulism non-toxic nonhemagglutinin family.</text>
</comment>
<feature type="chain" id="PRO_0000444923" description="Non-toxic nonhemagglutinin type A">
    <location>
        <begin position="1"/>
        <end position="1193"/>
    </location>
</feature>
<feature type="region of interest" description="Light chain nLC" evidence="1">
    <location>
        <begin position="1"/>
        <end position="408"/>
    </location>
</feature>
<feature type="region of interest" description="N-heavy chain nHN" evidence="1">
    <location>
        <begin position="409"/>
        <end position="829"/>
    </location>
</feature>
<feature type="region of interest" description="C-heavy chain nHC; required for protection of BoNT/A at pH 2.0" evidence="1">
    <location>
        <begin position="830"/>
        <end position="1193"/>
    </location>
</feature>
<feature type="site" description="Cleaved during long-term storage, protected in M-PTC complex" evidence="1">
    <location>
        <begin position="133"/>
        <end position="134"/>
    </location>
</feature>
<feature type="disulfide bond" evidence="4 5">
    <location>
        <begin position="583"/>
        <end position="755"/>
    </location>
</feature>
<feature type="strand" evidence="6">
    <location>
        <begin position="15"/>
        <end position="22"/>
    </location>
</feature>
<feature type="strand" evidence="6">
    <location>
        <begin position="29"/>
        <end position="36"/>
    </location>
</feature>
<feature type="strand" evidence="6">
    <location>
        <begin position="39"/>
        <end position="42"/>
    </location>
</feature>
<feature type="helix" evidence="6">
    <location>
        <begin position="55"/>
        <end position="57"/>
    </location>
</feature>
<feature type="turn" evidence="6">
    <location>
        <begin position="66"/>
        <end position="69"/>
    </location>
</feature>
<feature type="helix" evidence="6">
    <location>
        <begin position="72"/>
        <end position="90"/>
    </location>
</feature>
<feature type="helix" evidence="6">
    <location>
        <begin position="93"/>
        <end position="104"/>
    </location>
</feature>
<feature type="strand" evidence="6">
    <location>
        <begin position="151"/>
        <end position="153"/>
    </location>
</feature>
<feature type="strand" evidence="6">
    <location>
        <begin position="155"/>
        <end position="158"/>
    </location>
</feature>
<feature type="strand" evidence="6">
    <location>
        <begin position="164"/>
        <end position="166"/>
    </location>
</feature>
<feature type="strand" evidence="6">
    <location>
        <begin position="168"/>
        <end position="172"/>
    </location>
</feature>
<feature type="strand" evidence="6">
    <location>
        <begin position="182"/>
        <end position="186"/>
    </location>
</feature>
<feature type="helix" evidence="6">
    <location>
        <begin position="188"/>
        <end position="192"/>
    </location>
</feature>
<feature type="strand" evidence="6">
    <location>
        <begin position="193"/>
        <end position="195"/>
    </location>
</feature>
<feature type="strand" evidence="6">
    <location>
        <begin position="199"/>
        <end position="202"/>
    </location>
</feature>
<feature type="strand" evidence="6">
    <location>
        <begin position="206"/>
        <end position="211"/>
    </location>
</feature>
<feature type="helix" evidence="6">
    <location>
        <begin position="218"/>
        <end position="234"/>
    </location>
</feature>
<feature type="strand" evidence="6">
    <location>
        <begin position="243"/>
        <end position="248"/>
    </location>
</feature>
<feature type="strand" evidence="6">
    <location>
        <begin position="252"/>
        <end position="254"/>
    </location>
</feature>
<feature type="strand" evidence="6">
    <location>
        <begin position="257"/>
        <end position="261"/>
    </location>
</feature>
<feature type="helix" evidence="6">
    <location>
        <begin position="262"/>
        <end position="268"/>
    </location>
</feature>
<feature type="helix" evidence="6">
    <location>
        <begin position="273"/>
        <end position="276"/>
    </location>
</feature>
<feature type="helix" evidence="6">
    <location>
        <begin position="286"/>
        <end position="304"/>
    </location>
</feature>
<feature type="turn" evidence="6">
    <location>
        <begin position="305"/>
        <end position="308"/>
    </location>
</feature>
<feature type="turn" evidence="6">
    <location>
        <begin position="310"/>
        <end position="312"/>
    </location>
</feature>
<feature type="helix" evidence="6">
    <location>
        <begin position="314"/>
        <end position="323"/>
    </location>
</feature>
<feature type="helix" evidence="6">
    <location>
        <begin position="328"/>
        <end position="333"/>
    </location>
</feature>
<feature type="helix" evidence="6">
    <location>
        <begin position="336"/>
        <end position="342"/>
    </location>
</feature>
<feature type="helix" evidence="6">
    <location>
        <begin position="355"/>
        <end position="358"/>
    </location>
</feature>
<feature type="strand" evidence="6">
    <location>
        <begin position="363"/>
        <end position="365"/>
    </location>
</feature>
<feature type="turn" evidence="6">
    <location>
        <begin position="368"/>
        <end position="371"/>
    </location>
</feature>
<feature type="helix" evidence="6">
    <location>
        <begin position="380"/>
        <end position="383"/>
    </location>
</feature>
<feature type="helix" evidence="6">
    <location>
        <begin position="390"/>
        <end position="394"/>
    </location>
</feature>
<feature type="strand" evidence="6">
    <location>
        <begin position="400"/>
        <end position="406"/>
    </location>
</feature>
<feature type="strand" evidence="6">
    <location>
        <begin position="412"/>
        <end position="418"/>
    </location>
</feature>
<feature type="helix" evidence="6">
    <location>
        <begin position="430"/>
        <end position="433"/>
    </location>
</feature>
<feature type="helix" evidence="6">
    <location>
        <begin position="459"/>
        <end position="463"/>
    </location>
</feature>
<feature type="strand" evidence="6">
    <location>
        <begin position="491"/>
        <end position="497"/>
    </location>
</feature>
<feature type="helix" evidence="6">
    <location>
        <begin position="500"/>
        <end position="505"/>
    </location>
</feature>
<feature type="strand" evidence="6">
    <location>
        <begin position="515"/>
        <end position="518"/>
    </location>
</feature>
<feature type="helix" evidence="6">
    <location>
        <begin position="520"/>
        <end position="524"/>
    </location>
</feature>
<feature type="strand" evidence="6">
    <location>
        <begin position="531"/>
        <end position="533"/>
    </location>
</feature>
<feature type="helix" evidence="6">
    <location>
        <begin position="537"/>
        <end position="545"/>
    </location>
</feature>
<feature type="turn" evidence="6">
    <location>
        <begin position="546"/>
        <end position="548"/>
    </location>
</feature>
<feature type="helix" evidence="6">
    <location>
        <begin position="555"/>
        <end position="573"/>
    </location>
</feature>
<feature type="strand" evidence="6">
    <location>
        <begin position="576"/>
        <end position="581"/>
    </location>
</feature>
<feature type="strand" evidence="6">
    <location>
        <begin position="584"/>
        <end position="589"/>
    </location>
</feature>
<feature type="helix" evidence="6">
    <location>
        <begin position="592"/>
        <end position="596"/>
    </location>
</feature>
<feature type="strand" evidence="6">
    <location>
        <begin position="601"/>
        <end position="603"/>
    </location>
</feature>
<feature type="helix" evidence="6">
    <location>
        <begin position="605"/>
        <end position="612"/>
    </location>
</feature>
<feature type="helix" evidence="6">
    <location>
        <begin position="614"/>
        <end position="617"/>
    </location>
</feature>
<feature type="helix" evidence="6">
    <location>
        <begin position="643"/>
        <end position="675"/>
    </location>
</feature>
<feature type="helix" evidence="6">
    <location>
        <begin position="677"/>
        <end position="711"/>
    </location>
</feature>
<feature type="helix" evidence="6">
    <location>
        <begin position="717"/>
        <end position="759"/>
    </location>
</feature>
<feature type="helix" evidence="6">
    <location>
        <begin position="761"/>
        <end position="785"/>
    </location>
</feature>
<feature type="strand" evidence="6">
    <location>
        <begin position="788"/>
        <end position="790"/>
    </location>
</feature>
<feature type="helix" evidence="6">
    <location>
        <begin position="792"/>
        <end position="801"/>
    </location>
</feature>
<feature type="helix" evidence="6">
    <location>
        <begin position="806"/>
        <end position="809"/>
    </location>
</feature>
<feature type="helix" evidence="6">
    <location>
        <begin position="814"/>
        <end position="819"/>
    </location>
</feature>
<feature type="helix" evidence="6">
    <location>
        <begin position="824"/>
        <end position="833"/>
    </location>
</feature>
<feature type="strand" evidence="6">
    <location>
        <begin position="834"/>
        <end position="845"/>
    </location>
</feature>
<feature type="strand" evidence="6">
    <location>
        <begin position="848"/>
        <end position="853"/>
    </location>
</feature>
<feature type="strand" evidence="6">
    <location>
        <begin position="860"/>
        <end position="863"/>
    </location>
</feature>
<feature type="strand" evidence="6">
    <location>
        <begin position="868"/>
        <end position="871"/>
    </location>
</feature>
<feature type="strand" evidence="6">
    <location>
        <begin position="873"/>
        <end position="880"/>
    </location>
</feature>
<feature type="strand" evidence="6">
    <location>
        <begin position="882"/>
        <end position="884"/>
    </location>
</feature>
<feature type="strand" evidence="6">
    <location>
        <begin position="887"/>
        <end position="890"/>
    </location>
</feature>
<feature type="helix" evidence="6">
    <location>
        <begin position="892"/>
        <end position="895"/>
    </location>
</feature>
<feature type="strand" evidence="6">
    <location>
        <begin position="902"/>
        <end position="910"/>
    </location>
</feature>
<feature type="strand" evidence="6">
    <location>
        <begin position="918"/>
        <end position="925"/>
    </location>
</feature>
<feature type="strand" evidence="6">
    <location>
        <begin position="928"/>
        <end position="935"/>
    </location>
</feature>
<feature type="strand" evidence="6">
    <location>
        <begin position="938"/>
        <end position="944"/>
    </location>
</feature>
<feature type="strand" evidence="6">
    <location>
        <begin position="950"/>
        <end position="955"/>
    </location>
</feature>
<feature type="strand" evidence="6">
    <location>
        <begin position="960"/>
        <end position="962"/>
    </location>
</feature>
<feature type="strand" evidence="6">
    <location>
        <begin position="964"/>
        <end position="971"/>
    </location>
</feature>
<feature type="turn" evidence="6">
    <location>
        <begin position="972"/>
        <end position="975"/>
    </location>
</feature>
<feature type="strand" evidence="6">
    <location>
        <begin position="976"/>
        <end position="981"/>
    </location>
</feature>
<feature type="strand" evidence="6">
    <location>
        <begin position="984"/>
        <end position="990"/>
    </location>
</feature>
<feature type="strand" evidence="6">
    <location>
        <begin position="1001"/>
        <end position="1005"/>
    </location>
</feature>
<feature type="strand" evidence="6">
    <location>
        <begin position="1012"/>
        <end position="1022"/>
    </location>
</feature>
<feature type="helix" evidence="6">
    <location>
        <begin position="1026"/>
        <end position="1037"/>
    </location>
</feature>
<feature type="strand" evidence="6">
    <location>
        <begin position="1039"/>
        <end position="1041"/>
    </location>
</feature>
<feature type="strand" evidence="6">
    <location>
        <begin position="1047"/>
        <end position="1049"/>
    </location>
</feature>
<feature type="strand" evidence="6">
    <location>
        <begin position="1055"/>
        <end position="1063"/>
    </location>
</feature>
<feature type="strand" evidence="6">
    <location>
        <begin position="1067"/>
        <end position="1081"/>
    </location>
</feature>
<feature type="strand" evidence="6">
    <location>
        <begin position="1094"/>
        <end position="1097"/>
    </location>
</feature>
<feature type="strand" evidence="6">
    <location>
        <begin position="1111"/>
        <end position="1126"/>
    </location>
</feature>
<feature type="strand" evidence="6">
    <location>
        <begin position="1130"/>
        <end position="1136"/>
    </location>
</feature>
<feature type="helix" evidence="6">
    <location>
        <begin position="1138"/>
        <end position="1140"/>
    </location>
</feature>
<feature type="strand" evidence="6">
    <location>
        <begin position="1144"/>
        <end position="1147"/>
    </location>
</feature>
<feature type="strand" evidence="6">
    <location>
        <begin position="1156"/>
        <end position="1160"/>
    </location>
</feature>
<feature type="strand" evidence="6">
    <location>
        <begin position="1163"/>
        <end position="1170"/>
    </location>
</feature>
<feature type="strand" evidence="6">
    <location>
        <begin position="1175"/>
        <end position="1179"/>
    </location>
</feature>
<feature type="strand" evidence="6">
    <location>
        <begin position="1181"/>
        <end position="1183"/>
    </location>
</feature>
<feature type="helix" evidence="6">
    <location>
        <begin position="1185"/>
        <end position="1188"/>
    </location>
</feature>
<feature type="strand" evidence="6">
    <location>
        <begin position="1190"/>
        <end position="1193"/>
    </location>
</feature>
<organism>
    <name type="scientific">Clostridium botulinum</name>
    <dbReference type="NCBI Taxonomy" id="1491"/>
    <lineage>
        <taxon>Bacteria</taxon>
        <taxon>Bacillati</taxon>
        <taxon>Bacillota</taxon>
        <taxon>Clostridia</taxon>
        <taxon>Eubacteriales</taxon>
        <taxon>Clostridiaceae</taxon>
        <taxon>Clostridium</taxon>
    </lineage>
</organism>